<proteinExistence type="inferred from homology"/>
<name>ATG18_EMENI</name>
<reference key="1">
    <citation type="journal article" date="2005" name="Nature">
        <title>Sequencing of Aspergillus nidulans and comparative analysis with A. fumigatus and A. oryzae.</title>
        <authorList>
            <person name="Galagan J.E."/>
            <person name="Calvo S.E."/>
            <person name="Cuomo C."/>
            <person name="Ma L.-J."/>
            <person name="Wortman J.R."/>
            <person name="Batzoglou S."/>
            <person name="Lee S.-I."/>
            <person name="Bastuerkmen M."/>
            <person name="Spevak C.C."/>
            <person name="Clutterbuck J."/>
            <person name="Kapitonov V."/>
            <person name="Jurka J."/>
            <person name="Scazzocchio C."/>
            <person name="Farman M.L."/>
            <person name="Butler J."/>
            <person name="Purcell S."/>
            <person name="Harris S."/>
            <person name="Braus G.H."/>
            <person name="Draht O."/>
            <person name="Busch S."/>
            <person name="D'Enfert C."/>
            <person name="Bouchier C."/>
            <person name="Goldman G.H."/>
            <person name="Bell-Pedersen D."/>
            <person name="Griffiths-Jones S."/>
            <person name="Doonan J.H."/>
            <person name="Yu J."/>
            <person name="Vienken K."/>
            <person name="Pain A."/>
            <person name="Freitag M."/>
            <person name="Selker E.U."/>
            <person name="Archer D.B."/>
            <person name="Penalva M.A."/>
            <person name="Oakley B.R."/>
            <person name="Momany M."/>
            <person name="Tanaka T."/>
            <person name="Kumagai T."/>
            <person name="Asai K."/>
            <person name="Machida M."/>
            <person name="Nierman W.C."/>
            <person name="Denning D.W."/>
            <person name="Caddick M.X."/>
            <person name="Hynes M."/>
            <person name="Paoletti M."/>
            <person name="Fischer R."/>
            <person name="Miller B.L."/>
            <person name="Dyer P.S."/>
            <person name="Sachs M.S."/>
            <person name="Osmani S.A."/>
            <person name="Birren B.W."/>
        </authorList>
    </citation>
    <scope>NUCLEOTIDE SEQUENCE [LARGE SCALE GENOMIC DNA]</scope>
    <source>
        <strain>FGSC A4 / ATCC 38163 / CBS 112.46 / NRRL 194 / M139</strain>
    </source>
</reference>
<reference key="2">
    <citation type="journal article" date="2009" name="Fungal Genet. Biol.">
        <title>The 2008 update of the Aspergillus nidulans genome annotation: a community effort.</title>
        <authorList>
            <person name="Wortman J.R."/>
            <person name="Gilsenan J.M."/>
            <person name="Joardar V."/>
            <person name="Deegan J."/>
            <person name="Clutterbuck J."/>
            <person name="Andersen M.R."/>
            <person name="Archer D."/>
            <person name="Bencina M."/>
            <person name="Braus G."/>
            <person name="Coutinho P."/>
            <person name="von Dohren H."/>
            <person name="Doonan J."/>
            <person name="Driessen A.J."/>
            <person name="Durek P."/>
            <person name="Espeso E."/>
            <person name="Fekete E."/>
            <person name="Flipphi M."/>
            <person name="Estrada C.G."/>
            <person name="Geysens S."/>
            <person name="Goldman G."/>
            <person name="de Groot P.W."/>
            <person name="Hansen K."/>
            <person name="Harris S.D."/>
            <person name="Heinekamp T."/>
            <person name="Helmstaedt K."/>
            <person name="Henrissat B."/>
            <person name="Hofmann G."/>
            <person name="Homan T."/>
            <person name="Horio T."/>
            <person name="Horiuchi H."/>
            <person name="James S."/>
            <person name="Jones M."/>
            <person name="Karaffa L."/>
            <person name="Karanyi Z."/>
            <person name="Kato M."/>
            <person name="Keller N."/>
            <person name="Kelly D.E."/>
            <person name="Kiel J.A."/>
            <person name="Kim J.M."/>
            <person name="van der Klei I.J."/>
            <person name="Klis F.M."/>
            <person name="Kovalchuk A."/>
            <person name="Krasevec N."/>
            <person name="Kubicek C.P."/>
            <person name="Liu B."/>
            <person name="Maccabe A."/>
            <person name="Meyer V."/>
            <person name="Mirabito P."/>
            <person name="Miskei M."/>
            <person name="Mos M."/>
            <person name="Mullins J."/>
            <person name="Nelson D.R."/>
            <person name="Nielsen J."/>
            <person name="Oakley B.R."/>
            <person name="Osmani S.A."/>
            <person name="Pakula T."/>
            <person name="Paszewski A."/>
            <person name="Paulsen I."/>
            <person name="Pilsyk S."/>
            <person name="Pocsi I."/>
            <person name="Punt P.J."/>
            <person name="Ram A.F."/>
            <person name="Ren Q."/>
            <person name="Robellet X."/>
            <person name="Robson G."/>
            <person name="Seiboth B."/>
            <person name="van Solingen P."/>
            <person name="Specht T."/>
            <person name="Sun J."/>
            <person name="Taheri-Talesh N."/>
            <person name="Takeshita N."/>
            <person name="Ussery D."/>
            <person name="vanKuyk P.A."/>
            <person name="Visser H."/>
            <person name="van de Vondervoort P.J."/>
            <person name="de Vries R.P."/>
            <person name="Walton J."/>
            <person name="Xiang X."/>
            <person name="Xiong Y."/>
            <person name="Zeng A.P."/>
            <person name="Brandt B.W."/>
            <person name="Cornell M.J."/>
            <person name="van den Hondel C.A."/>
            <person name="Visser J."/>
            <person name="Oliver S.G."/>
            <person name="Turner G."/>
        </authorList>
    </citation>
    <scope>GENOME REANNOTATION</scope>
    <source>
        <strain>FGSC A4 / ATCC 38163 / CBS 112.46 / NRRL 194 / M139</strain>
    </source>
</reference>
<sequence length="429" mass="46877">MTMNFVTFNQDYSYLAVATSKGFRIFTTDPFAKSYETKDGNIAIIEMLFSTSLVALILSPRRLQITNTKRQSTICELTFPTTVLAVKLNRKRLVIVLEDQIYLYDIQTMKLLYTIETSPNPNALCALSPSSENCYLAYPLPQKAAPSSFNPPAHAPPGNTHVSPTSGEVLIFDTLKLEAINVIEAHRSPLACITLNSDGTLIATASDKGTIIRVFSVPDGHKLYQFRRGSIPSRIFSMSFNTTSTLLCVSSSTETIHLFKLSQPSQLQETSSANTSSTGRRRSLSSLSQSPEREATEEDNGSSDLASRKHNGTLMGMLRRTSQNVGGAFAAKVGGYLPKGVSEMWEPARDFAWIKIPKPNQGQGPNANTGPLRSVVAMSSNTPQVMVVTSDGNFYVFSIDLSKGGEGTLTKQYSVLESNDRLGYSVADY</sequence>
<gene>
    <name type="primary">atg18</name>
    <name type="ORF">AN0127</name>
</gene>
<feature type="chain" id="PRO_0000050866" description="Autophagy-related protein 18">
    <location>
        <begin position="1"/>
        <end position="429"/>
    </location>
</feature>
<feature type="repeat" description="WD 1">
    <location>
        <begin position="1"/>
        <end position="36"/>
    </location>
</feature>
<feature type="repeat" description="WD 2">
    <location>
        <begin position="69"/>
        <end position="114"/>
    </location>
</feature>
<feature type="repeat" description="WD 3">
    <location>
        <begin position="139"/>
        <end position="182"/>
    </location>
</feature>
<feature type="repeat" description="WD 4">
    <location>
        <begin position="185"/>
        <end position="225"/>
    </location>
</feature>
<feature type="repeat" description="WD 5">
    <location>
        <begin position="230"/>
        <end position="269"/>
    </location>
</feature>
<feature type="repeat" description="WD 6">
    <location>
        <begin position="309"/>
        <end position="355"/>
    </location>
</feature>
<feature type="repeat" description="WD 7">
    <location>
        <begin position="367"/>
        <end position="407"/>
    </location>
</feature>
<feature type="region of interest" description="Disordered" evidence="3">
    <location>
        <begin position="267"/>
        <end position="309"/>
    </location>
</feature>
<feature type="short sequence motif" description="L/FRRG motif" evidence="2">
    <location>
        <begin position="226"/>
        <end position="230"/>
    </location>
</feature>
<organism>
    <name type="scientific">Emericella nidulans (strain FGSC A4 / ATCC 38163 / CBS 112.46 / NRRL 194 / M139)</name>
    <name type="common">Aspergillus nidulans</name>
    <dbReference type="NCBI Taxonomy" id="227321"/>
    <lineage>
        <taxon>Eukaryota</taxon>
        <taxon>Fungi</taxon>
        <taxon>Dikarya</taxon>
        <taxon>Ascomycota</taxon>
        <taxon>Pezizomycotina</taxon>
        <taxon>Eurotiomycetes</taxon>
        <taxon>Eurotiomycetidae</taxon>
        <taxon>Eurotiales</taxon>
        <taxon>Aspergillaceae</taxon>
        <taxon>Aspergillus</taxon>
        <taxon>Aspergillus subgen. Nidulantes</taxon>
    </lineage>
</organism>
<accession>Q5BH53</accession>
<accession>C8VQJ6</accession>
<comment type="function">
    <text evidence="1">The PI(3,5)P2 regulatory complex regulates both the synthesis and turnover of phosphatidylinositol 3,5-bisphosphate (PtdIns(3,5)P2). Necessary for proper vacuole morphology. Plays an important role in osmotically-induced vacuole fragmentation. Required for cytoplasm to vacuole transport (Cvt) vesicle formation, pexophagy and starvation-induced autophagy. Involved in correct ATG9 trafficking to the pre-autophagosomal structure. Might also be involved in premeiotic DNA replication (By similarity).</text>
</comment>
<comment type="subunit">
    <text evidence="1">Component of the PI(3,5)P2 regulatory complex.</text>
</comment>
<comment type="subcellular location">
    <subcellularLocation>
        <location evidence="1">Preautophagosomal structure membrane</location>
        <topology evidence="1">Peripheral membrane protein</topology>
    </subcellularLocation>
    <subcellularLocation>
        <location evidence="1">Vacuole membrane</location>
        <topology evidence="1">Peripheral membrane protein</topology>
    </subcellularLocation>
    <subcellularLocation>
        <location evidence="1">Endosome membrane</location>
        <topology evidence="1">Peripheral membrane protein</topology>
    </subcellularLocation>
</comment>
<comment type="domain">
    <text evidence="1">The N-terminus might form a beta-propeller domain involved in specific binding to phosphatidylinositol 3,5-bisphosphate (PIP2), leading to the association of the protein to the membrane.</text>
</comment>
<comment type="domain">
    <text evidence="2">The L/FRRG motif is essential for the cytoplasm to vacuole transport (Cvt) pathway, for the recruitment of atg8 and atg16 to the PAS in nutrient-rich medium, and for its recruitment to and dissociation from the PAS under starvation conditions.</text>
</comment>
<comment type="similarity">
    <text evidence="4">Belongs to the WD repeat PROPPIN family.</text>
</comment>
<comment type="sequence caution" evidence="4">
    <conflict type="erroneous gene model prediction">
        <sequence resource="EMBL-CDS" id="EAA65305"/>
    </conflict>
</comment>
<protein>
    <recommendedName>
        <fullName>Autophagy-related protein 18</fullName>
    </recommendedName>
</protein>
<dbReference type="EMBL" id="AACD01000004">
    <property type="protein sequence ID" value="EAA65305.1"/>
    <property type="status" value="ALT_SEQ"/>
    <property type="molecule type" value="Genomic_DNA"/>
</dbReference>
<dbReference type="EMBL" id="BN001308">
    <property type="protein sequence ID" value="CBF90145.1"/>
    <property type="molecule type" value="Genomic_DNA"/>
</dbReference>
<dbReference type="RefSeq" id="XP_657731.1">
    <property type="nucleotide sequence ID" value="XM_652639.1"/>
</dbReference>
<dbReference type="SMR" id="Q5BH53"/>
<dbReference type="FunCoup" id="Q5BH53">
    <property type="interactions" value="542"/>
</dbReference>
<dbReference type="STRING" id="227321.Q5BH53"/>
<dbReference type="EnsemblFungi" id="CBF90145">
    <property type="protein sequence ID" value="CBF90145"/>
    <property type="gene ID" value="ANIA_00127"/>
</dbReference>
<dbReference type="VEuPathDB" id="FungiDB:AN0127"/>
<dbReference type="eggNOG" id="KOG2110">
    <property type="taxonomic scope" value="Eukaryota"/>
</dbReference>
<dbReference type="HOGENOM" id="CLU_025895_5_0_1"/>
<dbReference type="InParanoid" id="Q5BH53"/>
<dbReference type="OMA" id="NIAILEM"/>
<dbReference type="OrthoDB" id="1667587at2759"/>
<dbReference type="Proteomes" id="UP000000560">
    <property type="component" value="Chromosome VIII"/>
</dbReference>
<dbReference type="GO" id="GO:0005829">
    <property type="term" value="C:cytosol"/>
    <property type="evidence" value="ECO:0000318"/>
    <property type="project" value="GO_Central"/>
</dbReference>
<dbReference type="GO" id="GO:0010008">
    <property type="term" value="C:endosome membrane"/>
    <property type="evidence" value="ECO:0007669"/>
    <property type="project" value="UniProtKB-SubCell"/>
</dbReference>
<dbReference type="GO" id="GO:0000329">
    <property type="term" value="C:fungal-type vacuole membrane"/>
    <property type="evidence" value="ECO:0000318"/>
    <property type="project" value="GO_Central"/>
</dbReference>
<dbReference type="GO" id="GO:0034045">
    <property type="term" value="C:phagophore assembly site membrane"/>
    <property type="evidence" value="ECO:0000318"/>
    <property type="project" value="GO_Central"/>
</dbReference>
<dbReference type="GO" id="GO:0080025">
    <property type="term" value="F:phosphatidylinositol-3,5-bisphosphate binding"/>
    <property type="evidence" value="ECO:0000318"/>
    <property type="project" value="GO_Central"/>
</dbReference>
<dbReference type="GO" id="GO:0032266">
    <property type="term" value="F:phosphatidylinositol-3-phosphate binding"/>
    <property type="evidence" value="ECO:0000318"/>
    <property type="project" value="GO_Central"/>
</dbReference>
<dbReference type="GO" id="GO:0030674">
    <property type="term" value="F:protein-macromolecule adaptor activity"/>
    <property type="evidence" value="ECO:0000318"/>
    <property type="project" value="GO_Central"/>
</dbReference>
<dbReference type="GO" id="GO:0000422">
    <property type="term" value="P:autophagy of mitochondrion"/>
    <property type="evidence" value="ECO:0000318"/>
    <property type="project" value="GO_Central"/>
</dbReference>
<dbReference type="GO" id="GO:0061723">
    <property type="term" value="P:glycophagy"/>
    <property type="evidence" value="ECO:0000318"/>
    <property type="project" value="GO_Central"/>
</dbReference>
<dbReference type="GO" id="GO:0044804">
    <property type="term" value="P:nucleophagy"/>
    <property type="evidence" value="ECO:0000318"/>
    <property type="project" value="GO_Central"/>
</dbReference>
<dbReference type="GO" id="GO:0000425">
    <property type="term" value="P:pexophagy"/>
    <property type="evidence" value="ECO:0000318"/>
    <property type="project" value="GO_Central"/>
</dbReference>
<dbReference type="GO" id="GO:0034497">
    <property type="term" value="P:protein localization to phagophore assembly site"/>
    <property type="evidence" value="ECO:0000318"/>
    <property type="project" value="GO_Central"/>
</dbReference>
<dbReference type="GO" id="GO:0015031">
    <property type="term" value="P:protein transport"/>
    <property type="evidence" value="ECO:0007669"/>
    <property type="project" value="UniProtKB-KW"/>
</dbReference>
<dbReference type="FunFam" id="2.130.10.10:FF:000965">
    <property type="entry name" value="Autophagy-like protein 18 Atg18"/>
    <property type="match status" value="1"/>
</dbReference>
<dbReference type="Gene3D" id="2.130.10.10">
    <property type="entry name" value="YVTN repeat-like/Quinoprotein amine dehydrogenase"/>
    <property type="match status" value="1"/>
</dbReference>
<dbReference type="InterPro" id="IPR048720">
    <property type="entry name" value="PROPPIN"/>
</dbReference>
<dbReference type="InterPro" id="IPR015943">
    <property type="entry name" value="WD40/YVTN_repeat-like_dom_sf"/>
</dbReference>
<dbReference type="InterPro" id="IPR036322">
    <property type="entry name" value="WD40_repeat_dom_sf"/>
</dbReference>
<dbReference type="InterPro" id="IPR001680">
    <property type="entry name" value="WD40_rpt"/>
</dbReference>
<dbReference type="PANTHER" id="PTHR11227">
    <property type="entry name" value="WD-REPEAT PROTEIN INTERACTING WITH PHOSPHOINOSIDES WIPI -RELATED"/>
    <property type="match status" value="1"/>
</dbReference>
<dbReference type="Pfam" id="PF21032">
    <property type="entry name" value="PROPPIN"/>
    <property type="match status" value="2"/>
</dbReference>
<dbReference type="SMART" id="SM00320">
    <property type="entry name" value="WD40"/>
    <property type="match status" value="2"/>
</dbReference>
<dbReference type="SUPFAM" id="SSF50978">
    <property type="entry name" value="WD40 repeat-like"/>
    <property type="match status" value="1"/>
</dbReference>
<keyword id="KW-0072">Autophagy</keyword>
<keyword id="KW-0967">Endosome</keyword>
<keyword id="KW-0472">Membrane</keyword>
<keyword id="KW-0653">Protein transport</keyword>
<keyword id="KW-1185">Reference proteome</keyword>
<keyword id="KW-0677">Repeat</keyword>
<keyword id="KW-0813">Transport</keyword>
<keyword id="KW-0926">Vacuole</keyword>
<keyword id="KW-0853">WD repeat</keyword>
<evidence type="ECO:0000250" key="1"/>
<evidence type="ECO:0000250" key="2">
    <source>
        <dbReference type="UniProtKB" id="P43601"/>
    </source>
</evidence>
<evidence type="ECO:0000256" key="3">
    <source>
        <dbReference type="SAM" id="MobiDB-lite"/>
    </source>
</evidence>
<evidence type="ECO:0000305" key="4"/>